<accession>Q2T9K0</accession>
<accession>A1L3V7</accession>
<accession>B7ZLZ5</accession>
<accession>B7ZLZ6</accession>
<accession>C9JJ62</accession>
<accession>E9PGA9</accession>
<accession>Q0P6F7</accession>
<accession>Q6ZT47</accession>
<accession>Q8IXR1</accession>
<accession>Q8N4G3</accession>
<organism>
    <name type="scientific">Homo sapiens</name>
    <name type="common">Human</name>
    <dbReference type="NCBI Taxonomy" id="9606"/>
    <lineage>
        <taxon>Eukaryota</taxon>
        <taxon>Metazoa</taxon>
        <taxon>Chordata</taxon>
        <taxon>Craniata</taxon>
        <taxon>Vertebrata</taxon>
        <taxon>Euteleostomi</taxon>
        <taxon>Mammalia</taxon>
        <taxon>Eutheria</taxon>
        <taxon>Euarchontoglires</taxon>
        <taxon>Primates</taxon>
        <taxon>Haplorrhini</taxon>
        <taxon>Catarrhini</taxon>
        <taxon>Hominidae</taxon>
        <taxon>Homo</taxon>
    </lineage>
</organism>
<keyword id="KW-0025">Alternative splicing</keyword>
<keyword id="KW-0472">Membrane</keyword>
<keyword id="KW-0597">Phosphoprotein</keyword>
<keyword id="KW-1267">Proteomics identification</keyword>
<keyword id="KW-1185">Reference proteome</keyword>
<keyword id="KW-0812">Transmembrane</keyword>
<keyword id="KW-1133">Transmembrane helix</keyword>
<proteinExistence type="evidence at protein level"/>
<dbReference type="EMBL" id="AK126914">
    <property type="protein sequence ID" value="BAC86747.1"/>
    <property type="status" value="ALT_SEQ"/>
    <property type="molecule type" value="mRNA"/>
</dbReference>
<dbReference type="EMBL" id="AC046143">
    <property type="status" value="NOT_ANNOTATED_CDS"/>
    <property type="molecule type" value="Genomic_DNA"/>
</dbReference>
<dbReference type="EMBL" id="BC034353">
    <property type="protein sequence ID" value="AAH34353.1"/>
    <property type="status" value="ALT_INIT"/>
    <property type="molecule type" value="mRNA"/>
</dbReference>
<dbReference type="EMBL" id="BC014883">
    <property type="protein sequence ID" value="AAH14883.1"/>
    <property type="molecule type" value="mRNA"/>
</dbReference>
<dbReference type="EMBL" id="BC111485">
    <property type="protein sequence ID" value="AAI11486.1"/>
    <property type="molecule type" value="mRNA"/>
</dbReference>
<dbReference type="EMBL" id="BC130297">
    <property type="protein sequence ID" value="AAI30298.1"/>
    <property type="molecule type" value="mRNA"/>
</dbReference>
<dbReference type="EMBL" id="BC144158">
    <property type="protein sequence ID" value="AAI44159.1"/>
    <property type="molecule type" value="mRNA"/>
</dbReference>
<dbReference type="EMBL" id="BC144159">
    <property type="protein sequence ID" value="AAI44160.1"/>
    <property type="molecule type" value="mRNA"/>
</dbReference>
<dbReference type="CCDS" id="CCDS3308.2">
    <molecule id="Q2T9K0-7"/>
</dbReference>
<dbReference type="CCDS" id="CCDS33921.1">
    <molecule id="Q2T9K0-2"/>
</dbReference>
<dbReference type="CCDS" id="CCDS54698.1">
    <molecule id="Q2T9K0-4"/>
</dbReference>
<dbReference type="CCDS" id="CCDS54699.1">
    <molecule id="Q2T9K0-1"/>
</dbReference>
<dbReference type="RefSeq" id="NP_001011655.1">
    <molecule id="Q2T9K0-2"/>
    <property type="nucleotide sequence ID" value="NM_001011655.3"/>
</dbReference>
<dbReference type="RefSeq" id="NP_001159777.1">
    <molecule id="Q2T9K0-1"/>
    <property type="nucleotide sequence ID" value="NM_001166305.2"/>
</dbReference>
<dbReference type="RefSeq" id="NP_001159778.1">
    <molecule id="Q2T9K0-4"/>
    <property type="nucleotide sequence ID" value="NM_001166306.2"/>
</dbReference>
<dbReference type="RefSeq" id="NP_612408.3">
    <molecule id="Q2T9K0-7"/>
    <property type="nucleotide sequence ID" value="NM_138399.4"/>
</dbReference>
<dbReference type="RefSeq" id="XP_005269428.1">
    <property type="nucleotide sequence ID" value="XM_005269371.4"/>
</dbReference>
<dbReference type="BioGRID" id="125003">
    <property type="interactions" value="15"/>
</dbReference>
<dbReference type="FunCoup" id="Q2T9K0">
    <property type="interactions" value="26"/>
</dbReference>
<dbReference type="IntAct" id="Q2T9K0">
    <property type="interactions" value="11"/>
</dbReference>
<dbReference type="MINT" id="Q2T9K0"/>
<dbReference type="STRING" id="9606.ENSP00000376227"/>
<dbReference type="TCDB" id="2.A.43.5.1">
    <property type="family name" value="the lysosomal cystine transporter (lct) family"/>
</dbReference>
<dbReference type="GlyGen" id="Q2T9K0">
    <property type="glycosylation" value="2 sites, 1 O-linked glycan (2 sites)"/>
</dbReference>
<dbReference type="iPTMnet" id="Q2T9K0"/>
<dbReference type="PhosphoSitePlus" id="Q2T9K0"/>
<dbReference type="SwissPalm" id="Q2T9K0"/>
<dbReference type="BioMuta" id="TMEM44"/>
<dbReference type="DMDM" id="378405227"/>
<dbReference type="jPOST" id="Q2T9K0"/>
<dbReference type="MassIVE" id="Q2T9K0"/>
<dbReference type="PaxDb" id="9606-ENSP00000376227"/>
<dbReference type="PeptideAtlas" id="Q2T9K0"/>
<dbReference type="ProteomicsDB" id="20275"/>
<dbReference type="ProteomicsDB" id="61447">
    <molecule id="Q2T9K0-1"/>
</dbReference>
<dbReference type="ProteomicsDB" id="61448">
    <molecule id="Q2T9K0-2"/>
</dbReference>
<dbReference type="ProteomicsDB" id="61449">
    <molecule id="Q2T9K0-4"/>
</dbReference>
<dbReference type="ProteomicsDB" id="61450">
    <molecule id="Q2T9K0-6"/>
</dbReference>
<dbReference type="Antibodypedia" id="50183">
    <property type="antibodies" value="40 antibodies from 12 providers"/>
</dbReference>
<dbReference type="DNASU" id="93109"/>
<dbReference type="Ensembl" id="ENST00000347147.9">
    <molecule id="Q2T9K0-2"/>
    <property type="protein sequence ID" value="ENSP00000333355.6"/>
    <property type="gene ID" value="ENSG00000145014.18"/>
</dbReference>
<dbReference type="Ensembl" id="ENST00000381975.7">
    <molecule id="Q2T9K0-4"/>
    <property type="protein sequence ID" value="ENSP00000371402.3"/>
    <property type="gene ID" value="ENSG00000145014.18"/>
</dbReference>
<dbReference type="Ensembl" id="ENST00000392432.6">
    <molecule id="Q2T9K0-1"/>
    <property type="protein sequence ID" value="ENSP00000376227.2"/>
    <property type="gene ID" value="ENSG00000145014.18"/>
</dbReference>
<dbReference type="Ensembl" id="ENST00000473092.5">
    <molecule id="Q2T9K0-7"/>
    <property type="protein sequence ID" value="ENSP00000418674.1"/>
    <property type="gene ID" value="ENSG00000145014.18"/>
</dbReference>
<dbReference type="GeneID" id="93109"/>
<dbReference type="KEGG" id="hsa:93109"/>
<dbReference type="MANE-Select" id="ENST00000347147.9">
    <molecule id="Q2T9K0-2"/>
    <property type="protein sequence ID" value="ENSP00000333355.6"/>
    <property type="RefSeq nucleotide sequence ID" value="NM_001011655.3"/>
    <property type="RefSeq protein sequence ID" value="NP_001011655.1"/>
</dbReference>
<dbReference type="UCSC" id="uc003fue.4">
    <molecule id="Q2T9K0-1"/>
    <property type="organism name" value="human"/>
</dbReference>
<dbReference type="AGR" id="HGNC:25120"/>
<dbReference type="CTD" id="93109"/>
<dbReference type="DisGeNET" id="93109"/>
<dbReference type="GeneCards" id="TMEM44"/>
<dbReference type="HGNC" id="HGNC:25120">
    <property type="gene designation" value="TMEM44"/>
</dbReference>
<dbReference type="HPA" id="ENSG00000145014">
    <property type="expression patterns" value="Low tissue specificity"/>
</dbReference>
<dbReference type="neXtProt" id="NX_Q2T9K0"/>
<dbReference type="OpenTargets" id="ENSG00000145014"/>
<dbReference type="PharmGKB" id="PA134916107"/>
<dbReference type="VEuPathDB" id="HostDB:ENSG00000145014"/>
<dbReference type="eggNOG" id="ENOG502RRA0">
    <property type="taxonomic scope" value="Eukaryota"/>
</dbReference>
<dbReference type="GeneTree" id="ENSGT00390000018718"/>
<dbReference type="HOGENOM" id="CLU_053989_0_0_1"/>
<dbReference type="InParanoid" id="Q2T9K0"/>
<dbReference type="OMA" id="WGDEAVC"/>
<dbReference type="OrthoDB" id="8048523at2759"/>
<dbReference type="PAN-GO" id="Q2T9K0">
    <property type="GO annotations" value="0 GO annotations based on evolutionary models"/>
</dbReference>
<dbReference type="PhylomeDB" id="Q2T9K0"/>
<dbReference type="TreeFam" id="TF337424"/>
<dbReference type="PathwayCommons" id="Q2T9K0"/>
<dbReference type="SignaLink" id="Q2T9K0"/>
<dbReference type="BioGRID-ORCS" id="93109">
    <property type="hits" value="17 hits in 1156 CRISPR screens"/>
</dbReference>
<dbReference type="ChiTaRS" id="TMEM44">
    <property type="organism name" value="human"/>
</dbReference>
<dbReference type="GenomeRNAi" id="93109"/>
<dbReference type="Pharos" id="Q2T9K0">
    <property type="development level" value="Tdark"/>
</dbReference>
<dbReference type="PRO" id="PR:Q2T9K0"/>
<dbReference type="Proteomes" id="UP000005640">
    <property type="component" value="Chromosome 3"/>
</dbReference>
<dbReference type="RNAct" id="Q2T9K0">
    <property type="molecule type" value="protein"/>
</dbReference>
<dbReference type="Bgee" id="ENSG00000145014">
    <property type="expression patterns" value="Expressed in mucosa of transverse colon and 130 other cell types or tissues"/>
</dbReference>
<dbReference type="ExpressionAtlas" id="Q2T9K0">
    <property type="expression patterns" value="baseline and differential"/>
</dbReference>
<dbReference type="GO" id="GO:0016020">
    <property type="term" value="C:membrane"/>
    <property type="evidence" value="ECO:0007669"/>
    <property type="project" value="UniProtKB-SubCell"/>
</dbReference>
<dbReference type="GO" id="GO:0015174">
    <property type="term" value="F:basic amino acid transmembrane transporter activity"/>
    <property type="evidence" value="ECO:0000318"/>
    <property type="project" value="GO_Central"/>
</dbReference>
<dbReference type="InterPro" id="IPR051415">
    <property type="entry name" value="LAAT-1"/>
</dbReference>
<dbReference type="PANTHER" id="PTHR16201">
    <property type="entry name" value="SEVEN TRANSMEMBRANE PROTEIN 1-RELATED"/>
    <property type="match status" value="1"/>
</dbReference>
<dbReference type="PANTHER" id="PTHR16201:SF53">
    <property type="entry name" value="TRANSMEMBRANE PROTEIN 44"/>
    <property type="match status" value="1"/>
</dbReference>
<evidence type="ECO:0000255" key="1"/>
<evidence type="ECO:0000256" key="2">
    <source>
        <dbReference type="SAM" id="MobiDB-lite"/>
    </source>
</evidence>
<evidence type="ECO:0000269" key="3">
    <source>
    </source>
</evidence>
<evidence type="ECO:0000269" key="4">
    <source>
    </source>
</evidence>
<evidence type="ECO:0000303" key="5">
    <source>
    </source>
</evidence>
<evidence type="ECO:0000305" key="6"/>
<evidence type="ECO:0007744" key="7">
    <source>
    </source>
</evidence>
<gene>
    <name type="primary">TMEM44</name>
</gene>
<reference key="1">
    <citation type="journal article" date="2004" name="Nat. Genet.">
        <title>Complete sequencing and characterization of 21,243 full-length human cDNAs.</title>
        <authorList>
            <person name="Ota T."/>
            <person name="Suzuki Y."/>
            <person name="Nishikawa T."/>
            <person name="Otsuki T."/>
            <person name="Sugiyama T."/>
            <person name="Irie R."/>
            <person name="Wakamatsu A."/>
            <person name="Hayashi K."/>
            <person name="Sato H."/>
            <person name="Nagai K."/>
            <person name="Kimura K."/>
            <person name="Makita H."/>
            <person name="Sekine M."/>
            <person name="Obayashi M."/>
            <person name="Nishi T."/>
            <person name="Shibahara T."/>
            <person name="Tanaka T."/>
            <person name="Ishii S."/>
            <person name="Yamamoto J."/>
            <person name="Saito K."/>
            <person name="Kawai Y."/>
            <person name="Isono Y."/>
            <person name="Nakamura Y."/>
            <person name="Nagahari K."/>
            <person name="Murakami K."/>
            <person name="Yasuda T."/>
            <person name="Iwayanagi T."/>
            <person name="Wagatsuma M."/>
            <person name="Shiratori A."/>
            <person name="Sudo H."/>
            <person name="Hosoiri T."/>
            <person name="Kaku Y."/>
            <person name="Kodaira H."/>
            <person name="Kondo H."/>
            <person name="Sugawara M."/>
            <person name="Takahashi M."/>
            <person name="Kanda K."/>
            <person name="Yokoi T."/>
            <person name="Furuya T."/>
            <person name="Kikkawa E."/>
            <person name="Omura Y."/>
            <person name="Abe K."/>
            <person name="Kamihara K."/>
            <person name="Katsuta N."/>
            <person name="Sato K."/>
            <person name="Tanikawa M."/>
            <person name="Yamazaki M."/>
            <person name="Ninomiya K."/>
            <person name="Ishibashi T."/>
            <person name="Yamashita H."/>
            <person name="Murakawa K."/>
            <person name="Fujimori K."/>
            <person name="Tanai H."/>
            <person name="Kimata M."/>
            <person name="Watanabe M."/>
            <person name="Hiraoka S."/>
            <person name="Chiba Y."/>
            <person name="Ishida S."/>
            <person name="Ono Y."/>
            <person name="Takiguchi S."/>
            <person name="Watanabe S."/>
            <person name="Yosida M."/>
            <person name="Hotuta T."/>
            <person name="Kusano J."/>
            <person name="Kanehori K."/>
            <person name="Takahashi-Fujii A."/>
            <person name="Hara H."/>
            <person name="Tanase T.-O."/>
            <person name="Nomura Y."/>
            <person name="Togiya S."/>
            <person name="Komai F."/>
            <person name="Hara R."/>
            <person name="Takeuchi K."/>
            <person name="Arita M."/>
            <person name="Imose N."/>
            <person name="Musashino K."/>
            <person name="Yuuki H."/>
            <person name="Oshima A."/>
            <person name="Sasaki N."/>
            <person name="Aotsuka S."/>
            <person name="Yoshikawa Y."/>
            <person name="Matsunawa H."/>
            <person name="Ichihara T."/>
            <person name="Shiohata N."/>
            <person name="Sano S."/>
            <person name="Moriya S."/>
            <person name="Momiyama H."/>
            <person name="Satoh N."/>
            <person name="Takami S."/>
            <person name="Terashima Y."/>
            <person name="Suzuki O."/>
            <person name="Nakagawa S."/>
            <person name="Senoh A."/>
            <person name="Mizoguchi H."/>
            <person name="Goto Y."/>
            <person name="Shimizu F."/>
            <person name="Wakebe H."/>
            <person name="Hishigaki H."/>
            <person name="Watanabe T."/>
            <person name="Sugiyama A."/>
            <person name="Takemoto M."/>
            <person name="Kawakami B."/>
            <person name="Yamazaki M."/>
            <person name="Watanabe K."/>
            <person name="Kumagai A."/>
            <person name="Itakura S."/>
            <person name="Fukuzumi Y."/>
            <person name="Fujimori Y."/>
            <person name="Komiyama M."/>
            <person name="Tashiro H."/>
            <person name="Tanigami A."/>
            <person name="Fujiwara T."/>
            <person name="Ono T."/>
            <person name="Yamada K."/>
            <person name="Fujii Y."/>
            <person name="Ozaki K."/>
            <person name="Hirao M."/>
            <person name="Ohmori Y."/>
            <person name="Kawabata A."/>
            <person name="Hikiji T."/>
            <person name="Kobatake N."/>
            <person name="Inagaki H."/>
            <person name="Ikema Y."/>
            <person name="Okamoto S."/>
            <person name="Okitani R."/>
            <person name="Kawakami T."/>
            <person name="Noguchi S."/>
            <person name="Itoh T."/>
            <person name="Shigeta K."/>
            <person name="Senba T."/>
            <person name="Matsumura K."/>
            <person name="Nakajima Y."/>
            <person name="Mizuno T."/>
            <person name="Morinaga M."/>
            <person name="Sasaki M."/>
            <person name="Togashi T."/>
            <person name="Oyama M."/>
            <person name="Hata H."/>
            <person name="Watanabe M."/>
            <person name="Komatsu T."/>
            <person name="Mizushima-Sugano J."/>
            <person name="Satoh T."/>
            <person name="Shirai Y."/>
            <person name="Takahashi Y."/>
            <person name="Nakagawa K."/>
            <person name="Okumura K."/>
            <person name="Nagase T."/>
            <person name="Nomura N."/>
            <person name="Kikuchi H."/>
            <person name="Masuho Y."/>
            <person name="Yamashita R."/>
            <person name="Nakai K."/>
            <person name="Yada T."/>
            <person name="Nakamura Y."/>
            <person name="Ohara O."/>
            <person name="Isogai T."/>
            <person name="Sugano S."/>
        </authorList>
    </citation>
    <scope>NUCLEOTIDE SEQUENCE [LARGE SCALE MRNA]</scope>
    <scope>VARIANT HIS-232</scope>
    <source>
        <tissue>Brain</tissue>
    </source>
</reference>
<reference key="2">
    <citation type="journal article" date="2006" name="Nature">
        <title>The DNA sequence, annotation and analysis of human chromosome 3.</title>
        <authorList>
            <person name="Muzny D.M."/>
            <person name="Scherer S.E."/>
            <person name="Kaul R."/>
            <person name="Wang J."/>
            <person name="Yu J."/>
            <person name="Sudbrak R."/>
            <person name="Buhay C.J."/>
            <person name="Chen R."/>
            <person name="Cree A."/>
            <person name="Ding Y."/>
            <person name="Dugan-Rocha S."/>
            <person name="Gill R."/>
            <person name="Gunaratne P."/>
            <person name="Harris R.A."/>
            <person name="Hawes A.C."/>
            <person name="Hernandez J."/>
            <person name="Hodgson A.V."/>
            <person name="Hume J."/>
            <person name="Jackson A."/>
            <person name="Khan Z.M."/>
            <person name="Kovar-Smith C."/>
            <person name="Lewis L.R."/>
            <person name="Lozado R.J."/>
            <person name="Metzker M.L."/>
            <person name="Milosavljevic A."/>
            <person name="Miner G.R."/>
            <person name="Morgan M.B."/>
            <person name="Nazareth L.V."/>
            <person name="Scott G."/>
            <person name="Sodergren E."/>
            <person name="Song X.-Z."/>
            <person name="Steffen D."/>
            <person name="Wei S."/>
            <person name="Wheeler D.A."/>
            <person name="Wright M.W."/>
            <person name="Worley K.C."/>
            <person name="Yuan Y."/>
            <person name="Zhang Z."/>
            <person name="Adams C.Q."/>
            <person name="Ansari-Lari M.A."/>
            <person name="Ayele M."/>
            <person name="Brown M.J."/>
            <person name="Chen G."/>
            <person name="Chen Z."/>
            <person name="Clendenning J."/>
            <person name="Clerc-Blankenburg K.P."/>
            <person name="Chen R."/>
            <person name="Chen Z."/>
            <person name="Davis C."/>
            <person name="Delgado O."/>
            <person name="Dinh H.H."/>
            <person name="Dong W."/>
            <person name="Draper H."/>
            <person name="Ernst S."/>
            <person name="Fu G."/>
            <person name="Gonzalez-Garay M.L."/>
            <person name="Garcia D.K."/>
            <person name="Gillett W."/>
            <person name="Gu J."/>
            <person name="Hao B."/>
            <person name="Haugen E."/>
            <person name="Havlak P."/>
            <person name="He X."/>
            <person name="Hennig S."/>
            <person name="Hu S."/>
            <person name="Huang W."/>
            <person name="Jackson L.R."/>
            <person name="Jacob L.S."/>
            <person name="Kelly S.H."/>
            <person name="Kube M."/>
            <person name="Levy R."/>
            <person name="Li Z."/>
            <person name="Liu B."/>
            <person name="Liu J."/>
            <person name="Liu W."/>
            <person name="Lu J."/>
            <person name="Maheshwari M."/>
            <person name="Nguyen B.-V."/>
            <person name="Okwuonu G.O."/>
            <person name="Palmeiri A."/>
            <person name="Pasternak S."/>
            <person name="Perez L.M."/>
            <person name="Phelps K.A."/>
            <person name="Plopper F.J."/>
            <person name="Qiang B."/>
            <person name="Raymond C."/>
            <person name="Rodriguez R."/>
            <person name="Saenphimmachak C."/>
            <person name="Santibanez J."/>
            <person name="Shen H."/>
            <person name="Shen Y."/>
            <person name="Subramanian S."/>
            <person name="Tabor P.E."/>
            <person name="Verduzco D."/>
            <person name="Waldron L."/>
            <person name="Wang J."/>
            <person name="Wang J."/>
            <person name="Wang Q."/>
            <person name="Williams G.A."/>
            <person name="Wong G.K.-S."/>
            <person name="Yao Z."/>
            <person name="Zhang J."/>
            <person name="Zhang X."/>
            <person name="Zhao G."/>
            <person name="Zhou J."/>
            <person name="Zhou Y."/>
            <person name="Nelson D."/>
            <person name="Lehrach H."/>
            <person name="Reinhardt R."/>
            <person name="Naylor S.L."/>
            <person name="Yang H."/>
            <person name="Olson M."/>
            <person name="Weinstock G."/>
            <person name="Gibbs R.A."/>
        </authorList>
    </citation>
    <scope>NUCLEOTIDE SEQUENCE [LARGE SCALE GENOMIC DNA]</scope>
</reference>
<reference key="3">
    <citation type="journal article" date="2004" name="Genome Res.">
        <title>The status, quality, and expansion of the NIH full-length cDNA project: the Mammalian Gene Collection (MGC).</title>
        <authorList>
            <consortium name="The MGC Project Team"/>
        </authorList>
    </citation>
    <scope>NUCLEOTIDE SEQUENCE [LARGE SCALE MRNA] (ISOFORMS 1; 2; 3 AND 5)</scope>
    <scope>PARTIAL NUCLEOTIDE SEQUENCE [LARGE SCALE MRNA] (ISOFORM 4)</scope>
    <scope>VARIANTS ASN-24; HIS-232 AND ARG-284</scope>
    <source>
        <tissue>Brain</tissue>
        <tissue>Cerebellum</tissue>
        <tissue>Fetal brain</tissue>
        <tissue>Skin</tissue>
        <tissue>Uterus</tissue>
    </source>
</reference>
<reference key="4">
    <citation type="journal article" date="2013" name="J. Proteome Res.">
        <title>Toward a comprehensive characterization of a human cancer cell phosphoproteome.</title>
        <authorList>
            <person name="Zhou H."/>
            <person name="Di Palma S."/>
            <person name="Preisinger C."/>
            <person name="Peng M."/>
            <person name="Polat A.N."/>
            <person name="Heck A.J."/>
            <person name="Mohammed S."/>
        </authorList>
    </citation>
    <scope>PHOSPHORYLATION [LARGE SCALE ANALYSIS] AT SER-465</scope>
    <scope>IDENTIFICATION BY MASS SPECTROMETRY [LARGE SCALE ANALYSIS]</scope>
    <source>
        <tissue>Erythroleukemia</tissue>
    </source>
</reference>
<protein>
    <recommendedName>
        <fullName>Transmembrane protein 44</fullName>
    </recommendedName>
</protein>
<comment type="interaction">
    <interactant intactId="EBI-13076526">
        <id>Q2T9K0-2</id>
    </interactant>
    <interactant intactId="EBI-740744">
        <id>O95471</id>
        <label>CLDN7</label>
    </interactant>
    <organismsDiffer>false</organismsDiffer>
    <experiments>3</experiments>
</comment>
<comment type="interaction">
    <interactant intactId="EBI-13076526">
        <id>Q2T9K0-2</id>
    </interactant>
    <interactant intactId="EBI-18535450">
        <id>Q9GZR5</id>
        <label>ELOVL4</label>
    </interactant>
    <organismsDiffer>false</organismsDiffer>
    <experiments>3</experiments>
</comment>
<comment type="interaction">
    <interactant intactId="EBI-13076526">
        <id>Q2T9K0-2</id>
    </interactant>
    <interactant intactId="EBI-3907610">
        <id>Q8N2U9</id>
        <label>SLC66A2</label>
    </interactant>
    <organismsDiffer>false</organismsDiffer>
    <experiments>3</experiments>
</comment>
<comment type="subcellular location">
    <subcellularLocation>
        <location evidence="6">Membrane</location>
        <topology evidence="6">Multi-pass membrane protein</topology>
    </subcellularLocation>
</comment>
<comment type="alternative products">
    <event type="alternative splicing"/>
    <isoform>
        <id>Q2T9K0-1</id>
        <name>1</name>
        <sequence type="displayed"/>
    </isoform>
    <isoform>
        <id>Q2T9K0-2</id>
        <name>2</name>
        <sequence type="described" ref="VSP_024565"/>
    </isoform>
    <isoform>
        <id>Q2T9K0-4</id>
        <name>3</name>
        <sequence type="described" ref="VSP_024565 VSP_024569 VSP_024571"/>
    </isoform>
    <isoform>
        <id>Q2T9K0-6</id>
        <name>4</name>
        <sequence type="described" ref="VSP_024565 VSP_039211"/>
    </isoform>
    <isoform>
        <id>Q2T9K0-7</id>
        <name>5</name>
        <sequence type="described" ref="VSP_024565 VSP_046357"/>
    </isoform>
</comment>
<comment type="sequence caution" evidence="6">
    <conflict type="erroneous initiation">
        <sequence resource="EMBL-CDS" id="AAH34353"/>
    </conflict>
    <text>Truncated N-terminus.</text>
</comment>
<comment type="sequence caution" evidence="6">
    <conflict type="miscellaneous discrepancy">
        <sequence resource="EMBL-CDS" id="BAC86747"/>
    </conflict>
    <text>Unlikely isoform. Aberrant splice sites.</text>
</comment>
<name>TMM44_HUMAN</name>
<feature type="chain" id="PRO_0000284544" description="Transmembrane protein 44">
    <location>
        <begin position="1"/>
        <end position="475"/>
    </location>
</feature>
<feature type="topological domain" description="Extracellular" evidence="1">
    <location>
        <begin position="1"/>
        <end position="29"/>
    </location>
</feature>
<feature type="transmembrane region" description="Helical" evidence="1">
    <location>
        <begin position="30"/>
        <end position="50"/>
    </location>
</feature>
<feature type="topological domain" description="Cytoplasmic" evidence="1">
    <location>
        <begin position="51"/>
        <end position="61"/>
    </location>
</feature>
<feature type="transmembrane region" description="Helical" evidence="1">
    <location>
        <begin position="62"/>
        <end position="82"/>
    </location>
</feature>
<feature type="topological domain" description="Extracellular" evidence="1">
    <location>
        <begin position="83"/>
        <end position="88"/>
    </location>
</feature>
<feature type="transmembrane region" description="Helical" evidence="1">
    <location>
        <begin position="89"/>
        <end position="109"/>
    </location>
</feature>
<feature type="topological domain" description="Cytoplasmic" evidence="1">
    <location>
        <begin position="110"/>
        <end position="135"/>
    </location>
</feature>
<feature type="transmembrane region" description="Helical" evidence="1">
    <location>
        <begin position="136"/>
        <end position="156"/>
    </location>
</feature>
<feature type="topological domain" description="Extracellular" evidence="1">
    <location>
        <begin position="157"/>
        <end position="179"/>
    </location>
</feature>
<feature type="transmembrane region" description="Helical" evidence="1">
    <location>
        <begin position="180"/>
        <end position="200"/>
    </location>
</feature>
<feature type="topological domain" description="Cytoplasmic" evidence="1">
    <location>
        <begin position="201"/>
        <end position="259"/>
    </location>
</feature>
<feature type="transmembrane region" description="Helical" evidence="1">
    <location>
        <begin position="260"/>
        <end position="280"/>
    </location>
</feature>
<feature type="topological domain" description="Extracellular" evidence="1">
    <location>
        <begin position="281"/>
        <end position="294"/>
    </location>
</feature>
<feature type="transmembrane region" description="Helical" evidence="1">
    <location>
        <begin position="295"/>
        <end position="315"/>
    </location>
</feature>
<feature type="topological domain" description="Cytoplasmic" evidence="1">
    <location>
        <begin position="316"/>
        <end position="475"/>
    </location>
</feature>
<feature type="region of interest" description="Disordered" evidence="2">
    <location>
        <begin position="390"/>
        <end position="475"/>
    </location>
</feature>
<feature type="compositionally biased region" description="Low complexity" evidence="2">
    <location>
        <begin position="424"/>
        <end position="436"/>
    </location>
</feature>
<feature type="compositionally biased region" description="Basic and acidic residues" evidence="2">
    <location>
        <begin position="464"/>
        <end position="475"/>
    </location>
</feature>
<feature type="modified residue" description="Phosphoserine" evidence="7">
    <location>
        <position position="465"/>
    </location>
</feature>
<feature type="splice variant" id="VSP_024565" description="In isoform 2, isoform 3, isoform 4 and isoform 5." evidence="5">
    <location>
        <begin position="205"/>
        <end position="251"/>
    </location>
</feature>
<feature type="splice variant" id="VSP_024569" description="In isoform 3." evidence="5">
    <original>GCSATRLPGDGQTSAGDASLQDPPSYPPVQVIRARVSSGSSSEVSSINSDLEWDPE</original>
    <variation>AVPPGCQVTGRRAPEMRPCRTPRRTLPFRSSGPGCLPAAPLRSPPSTPTWSGTLKM</variation>
    <location>
        <begin position="388"/>
        <end position="443"/>
    </location>
</feature>
<feature type="splice variant" id="VSP_039211" description="In isoform 4." evidence="6">
    <original>E</original>
    <variation>EQKYWEALNSEQ</variation>
    <location>
        <position position="439"/>
    </location>
</feature>
<feature type="splice variant" id="VSP_046357" description="In isoform 5." evidence="5">
    <original>E</original>
    <variation>EKYWEALNSEQ</variation>
    <location>
        <position position="439"/>
    </location>
</feature>
<feature type="splice variant" id="VSP_024571" description="In isoform 3." evidence="5">
    <location>
        <begin position="444"/>
        <end position="475"/>
    </location>
</feature>
<feature type="sequence variant" id="VAR_031775" description="In dbSNP:rs1675955." evidence="4">
    <original>H</original>
    <variation>N</variation>
    <location>
        <position position="24"/>
    </location>
</feature>
<feature type="sequence variant" id="VAR_066998" description="In dbSNP:rs12695036." evidence="3 4">
    <original>R</original>
    <variation>H</variation>
    <location>
        <position position="232"/>
    </location>
</feature>
<feature type="sequence variant" id="VAR_066999" description="In dbSNP:rs922282." evidence="4">
    <original>Q</original>
    <variation>R</variation>
    <location>
        <position position="284"/>
    </location>
</feature>
<sequence length="475" mass="52201">MGEAPSPAPALWDWDYLDRCFARHRVCISFGLWICASSCWIAAHALLLYLRCAQKPRQDQSALCAACCLLTSLCDTVGALLARQLTIQVFTGAYLAAIDLVNFMFILFPVCGSKFKSNSDREARERKRRRQLRASVFALALPLSLGPCWALWVAVPKASATIRGPQRRLLASLLQENTEILGYLLGSVAAFGSWASRIPPLSRIAPPPTLGITTQHEIWRGQMSKPSQSPSRSPSGHWRAAAQRQVLGTEMCRGKTFPSIHLWTRLLSALAGLLYASAIVAHDQHPEYLLRATPWFLTSLGRAALDLAIIFLSCVMKSKMRQALGFAKEARESPDTQALLTCAEKEEENQENLDWVPLTTLSHCKSLRTMTAISRYMELTIEPVQQAGCSATRLPGDGQTSAGDASLQDPPSYPPVQVIRARVSSGSSSEVSSINSDLEWDPEDVNLEGSKENVELLGSQVHQDSVRTAHLSDDD</sequence>